<gene>
    <name type="primary">pgla-a</name>
    <name type="synonym">pyla</name>
</gene>
<keyword id="KW-0027">Amidation</keyword>
<keyword id="KW-0878">Amphibian defense peptide</keyword>
<keyword id="KW-0044">Antibiotic</keyword>
<keyword id="KW-0929">Antimicrobial</keyword>
<keyword id="KW-0165">Cleavage on pair of basic residues</keyword>
<keyword id="KW-0204">Cytolysis</keyword>
<keyword id="KW-0903">Direct protein sequencing</keyword>
<keyword id="KW-0295">Fungicide</keyword>
<keyword id="KW-0354">Hemolysis</keyword>
<keyword id="KW-1185">Reference proteome</keyword>
<keyword id="KW-0964">Secreted</keyword>
<keyword id="KW-0732">Signal</keyword>
<sequence>MYKQIFLCLIIAALCATIMAEASAFADADEDDDKRYVRGMASKAGAIAGKIAKVALKALGRRDS</sequence>
<evidence type="ECO:0000255" key="1"/>
<evidence type="ECO:0000269" key="2">
    <source>
    </source>
</evidence>
<evidence type="ECO:0000269" key="3">
    <source>
    </source>
</evidence>
<evidence type="ECO:0000269" key="4">
    <source>
    </source>
</evidence>
<evidence type="ECO:0000305" key="5"/>
<proteinExistence type="evidence at protein level"/>
<organism>
    <name type="scientific">Xenopus laevis</name>
    <name type="common">African clawed frog</name>
    <dbReference type="NCBI Taxonomy" id="8355"/>
    <lineage>
        <taxon>Eukaryota</taxon>
        <taxon>Metazoa</taxon>
        <taxon>Chordata</taxon>
        <taxon>Craniata</taxon>
        <taxon>Vertebrata</taxon>
        <taxon>Euteleostomi</taxon>
        <taxon>Amphibia</taxon>
        <taxon>Batrachia</taxon>
        <taxon>Anura</taxon>
        <taxon>Pipoidea</taxon>
        <taxon>Pipidae</taxon>
        <taxon>Xenopodinae</taxon>
        <taxon>Xenopus</taxon>
        <taxon>Xenopus</taxon>
    </lineage>
</organism>
<accession>Q99134</accession>
<accession>B7ZSG6</accession>
<protein>
    <recommendedName>
        <fullName>PYLa/PGLa A</fullName>
    </recommendedName>
    <component>
        <recommendedName>
            <fullName>PYLa</fullName>
        </recommendedName>
    </component>
    <component>
        <recommendedName>
            <fullName>PGLa</fullName>
        </recommendedName>
    </component>
    <component>
        <recommendedName>
            <fullName>PGLa-H</fullName>
        </recommendedName>
    </component>
</protein>
<name>PYLAA_XENLA</name>
<reference key="1">
    <citation type="journal article" date="1983" name="EMBO J.">
        <title>A novel peptide designated PYLa and its precursor as predicted from cloned mRNA of Xenopus laevis skin.</title>
        <authorList>
            <person name="Hoffmann W."/>
            <person name="Richter K."/>
            <person name="Kreil G."/>
        </authorList>
    </citation>
    <scope>NUCLEOTIDE SEQUENCE [MRNA]</scope>
    <source>
        <tissue>Skin</tissue>
    </source>
</reference>
<reference key="2">
    <citation type="journal article" date="1989" name="Eur. J. Biochem.">
        <title>The genes for the frog skin peptides GLa, xenopsin, levitide and caerulein contain a homologous export exon encoding a signal sequence and part of an amphiphilic peptide.</title>
        <authorList>
            <person name="Kuchler K."/>
            <person name="Kreil G."/>
            <person name="Sures I."/>
        </authorList>
    </citation>
    <scope>NUCLEOTIDE SEQUENCE [GENOMIC DNA]</scope>
</reference>
<reference key="3">
    <citation type="submission" date="2008-11" db="EMBL/GenBank/DDBJ databases">
        <authorList>
            <consortium name="NIH - Xenopus Gene Collection (XGC) project"/>
        </authorList>
    </citation>
    <scope>NUCLEOTIDE SEQUENCE [LARGE SCALE MRNA]</scope>
</reference>
<reference key="4">
    <citation type="journal article" date="1987" name="Biochem. J.">
        <title>Biosynthesis and degradation of peptides derived from Xenopus laevis prohormones.</title>
        <authorList>
            <person name="Giovannini M.G."/>
            <person name="Poulter L."/>
            <person name="Gibson B.W."/>
            <person name="Williams D.H."/>
        </authorList>
    </citation>
    <scope>PROTEIN SEQUENCE OF 39-59</scope>
    <scope>SUBCELLULAR LOCATION</scope>
    <scope>AMIDATION AT LEU-59</scope>
    <source>
        <tissue>Skin secretion</tissue>
    </source>
</reference>
<reference key="5">
    <citation type="journal article" date="1991" name="J. Biol. Chem.">
        <title>Antimicrobial peptides in the stomach of Xenopus laevis.</title>
        <authorList>
            <person name="Moore K.S."/>
            <person name="Bevins C.L."/>
            <person name="Brasseur M.M."/>
            <person name="Tomassini N."/>
            <person name="Turner K."/>
            <person name="Eck H."/>
            <person name="Zasloff M."/>
        </authorList>
    </citation>
    <scope>PROTEIN SEQUENCE OF 39-59</scope>
    <scope>FUNCTION</scope>
    <scope>SUBCELLULAR LOCATION</scope>
    <scope>TISSUE SPECIFICITY</scope>
    <scope>AMIDATION AT LEU-59</scope>
    <source>
        <tissue>Stomach</tissue>
    </source>
</reference>
<reference key="6">
    <citation type="journal article" date="2011" name="Int. J. Antimicrob. Agents">
        <title>Isolation and characterisation of a new antimicrobial peptide from the skin of Xenopus laevis.</title>
        <authorList>
            <person name="Hou F."/>
            <person name="Li J."/>
            <person name="Pan P."/>
            <person name="Xu J."/>
            <person name="Liu L."/>
            <person name="Liu W."/>
            <person name="Song B."/>
            <person name="Li N."/>
            <person name="Wan J."/>
            <person name="Gao H."/>
        </authorList>
    </citation>
    <scope>PROTEIN SEQUENCE OF 50-59</scope>
    <scope>FUNCTION</scope>
    <scope>SUBCELLULAR LOCATION</scope>
    <scope>TISSUE SPECIFICITY</scope>
    <scope>MASS SPECTROMETRY</scope>
    <source>
        <tissue>Skin secretion</tissue>
    </source>
</reference>
<comment type="function">
    <text evidence="2 3">PGLa and PGLa-H display a broad-spectrum of antibacterial activity against a range of Gram-positive and Gram-negative bacteria. PGLa also displays antifungal activity against C.albicans ATCC 14053. PGLa-H shows moderate antibacterial activity against the multidrug-resistant methicillin-resistant S.aureus (MRSA) but exhibits very little hemolytic activity.</text>
</comment>
<comment type="subcellular location">
    <subcellularLocation>
        <location evidence="2 3 4">Secreted</location>
    </subcellularLocation>
</comment>
<comment type="tissue specificity">
    <text evidence="2 3">Expressed by the skin glands. Synthesized in the stomach and stored in a novel granular multinucleated cell in the gastric mucosa. Stored as active, processed peptides in large granules within the granular gland secretions of the skin.</text>
</comment>
<comment type="mass spectrometry">
    <molecule>PGLa-H</molecule>
</comment>
<comment type="similarity">
    <text evidence="5">Belongs to the gastrin/cholecystokinin family. Magainin subfamily.</text>
</comment>
<dbReference type="EMBL" id="M12602">
    <property type="protein sequence ID" value="AAA49942.1"/>
    <property type="molecule type" value="mRNA"/>
</dbReference>
<dbReference type="EMBL" id="X01824">
    <property type="protein sequence ID" value="CAA25963.1"/>
    <property type="molecule type" value="mRNA"/>
</dbReference>
<dbReference type="EMBL" id="X13389">
    <property type="protein sequence ID" value="CAA31761.1"/>
    <property type="molecule type" value="Genomic_DNA"/>
</dbReference>
<dbReference type="EMBL" id="X13390">
    <property type="protein sequence ID" value="CAA31762.1"/>
    <property type="molecule type" value="Genomic_DNA"/>
</dbReference>
<dbReference type="EMBL" id="BC170516">
    <property type="protein sequence ID" value="AAI70516.1"/>
    <property type="molecule type" value="mRNA"/>
</dbReference>
<dbReference type="EMBL" id="BC170517">
    <property type="protein sequence ID" value="AAI70517.1"/>
    <property type="molecule type" value="mRNA"/>
</dbReference>
<dbReference type="PIR" id="A26815">
    <property type="entry name" value="A26815"/>
</dbReference>
<dbReference type="RefSeq" id="NP_001081314.1">
    <property type="nucleotide sequence ID" value="NM_001087845.1"/>
</dbReference>
<dbReference type="RefSeq" id="NP_001095268.1">
    <property type="nucleotide sequence ID" value="NM_001101798.1"/>
</dbReference>
<dbReference type="TCDB" id="1.C.16.1.5">
    <property type="family name" value="the magainin (magainin) family"/>
</dbReference>
<dbReference type="GeneID" id="397770"/>
<dbReference type="GeneID" id="780753"/>
<dbReference type="KEGG" id="xla:397770"/>
<dbReference type="CTD" id="397770"/>
<dbReference type="CTD" id="780753"/>
<dbReference type="Proteomes" id="UP000186698">
    <property type="component" value="Chromosome 6L"/>
</dbReference>
<dbReference type="Bgee" id="397770">
    <property type="expression patterns" value="Expressed in zone of skin and 13 other cell types or tissues"/>
</dbReference>
<dbReference type="GO" id="GO:0005576">
    <property type="term" value="C:extracellular region"/>
    <property type="evidence" value="ECO:0007669"/>
    <property type="project" value="UniProtKB-SubCell"/>
</dbReference>
<dbReference type="GO" id="GO:0042742">
    <property type="term" value="P:defense response to bacterium"/>
    <property type="evidence" value="ECO:0007669"/>
    <property type="project" value="UniProtKB-KW"/>
</dbReference>
<dbReference type="GO" id="GO:0050832">
    <property type="term" value="P:defense response to fungus"/>
    <property type="evidence" value="ECO:0007669"/>
    <property type="project" value="UniProtKB-KW"/>
</dbReference>
<dbReference type="GO" id="GO:0031640">
    <property type="term" value="P:killing of cells of another organism"/>
    <property type="evidence" value="ECO:0007669"/>
    <property type="project" value="UniProtKB-KW"/>
</dbReference>
<feature type="signal peptide" evidence="1">
    <location>
        <begin position="1"/>
        <end position="20"/>
    </location>
</feature>
<feature type="propeptide" id="PRO_0000010702">
    <location>
        <begin position="21"/>
        <end position="35"/>
    </location>
</feature>
<feature type="peptide" id="PRO_0000010703" description="PYLa">
    <location>
        <begin position="36"/>
        <end position="59"/>
    </location>
</feature>
<feature type="peptide" id="PRO_0000010704" description="PGLa">
    <location>
        <begin position="39"/>
        <end position="59"/>
    </location>
</feature>
<feature type="peptide" id="PRO_0000415794" description="PGLa-H">
    <location>
        <begin position="50"/>
        <end position="59"/>
    </location>
</feature>
<feature type="propeptide" id="PRO_0000010705">
    <location>
        <begin position="60"/>
        <end position="64"/>
    </location>
</feature>
<feature type="modified residue" description="Leucine amide" evidence="2 4">
    <location>
        <position position="59"/>
    </location>
</feature>